<name>ERYA1_SACER</name>
<reference key="1">
    <citation type="journal article" date="1991" name="Science">
        <title>Modular organization of genes required for complex polyketide biosynthesis.</title>
        <authorList>
            <person name="Donadio S."/>
            <person name="Staver M.J."/>
            <person name="McAlpine J.B."/>
            <person name="Swanson S.J."/>
            <person name="Katz L."/>
        </authorList>
    </citation>
    <scope>NUCLEOTIDE SEQUENCE [GENOMIC DNA]</scope>
    <scope>SUBUNIT</scope>
</reference>
<reference key="2">
    <citation type="journal article" date="1993" name="Gene">
        <title>IS1136, an insertion element in the erythromycin gene cluster of Saccharopolyspora erythraea.</title>
        <authorList>
            <person name="Donadio S."/>
            <person name="Staver M.J."/>
        </authorList>
    </citation>
    <scope>NUCLEOTIDE SEQUENCE [GENOMIC DNA] OF 3474-3491</scope>
</reference>
<reference key="3">
    <citation type="journal article" date="1992" name="FEBS Lett.">
        <title>Identification of DEBS 1, DEBS 2 and DEBS 3, the multienzyme polypeptides of the erythromycin-producing polyketide synthase from Saccharopolyspora erythraea.</title>
        <authorList>
            <person name="Caffrey P."/>
            <person name="Bevitt D.J."/>
            <person name="Staunton J."/>
            <person name="Leadlay P.F."/>
        </authorList>
    </citation>
    <scope>IDENTIFICATION</scope>
</reference>
<reference key="4">
    <citation type="journal article" date="2007" name="Annu. Rev. Biochem.">
        <title>Structure and mechanism of the 6-deoxyerythronolide B synthase.</title>
        <authorList>
            <person name="Khosla C."/>
            <person name="Tang Y."/>
            <person name="Chen A.Y."/>
            <person name="Schnarr N.A."/>
            <person name="Cane D.E."/>
        </authorList>
    </citation>
    <scope>FUNCTION</scope>
    <scope>PATHWAY</scope>
    <scope>SUBUNIT</scope>
</reference>
<reference key="5">
    <citation type="journal article" date="2010" name="Chem. Biol.">
        <title>Complete biosynthesis of erythromycin A and designed analogs using E. coli as a heterologous host.</title>
        <authorList>
            <person name="Zhang H."/>
            <person name="Wang Y."/>
            <person name="Wu J."/>
            <person name="Skalina K."/>
            <person name="Pfeifer B.A."/>
        </authorList>
    </citation>
    <scope>FUNCTION</scope>
    <scope>CATALYTIC ACTIVITY</scope>
    <scope>PATHWAY</scope>
</reference>
<reference key="6">
    <citation type="journal article" date="2006" name="Structure">
        <title>The structure of a ketoreductase determines the organization of the beta-carbon processing enzymes of modular polyketide synthases.</title>
        <authorList>
            <person name="Keatinge-Clay A.T."/>
            <person name="Stroud R.M."/>
        </authorList>
    </citation>
    <scope>X-RAY CRYSTALLOGRAPHY (1.79 ANGSTROMS) OF 1391-1872 IN COMPLEX WITH NADP</scope>
    <scope>FUNCTION</scope>
    <scope>MUTAGENESIS OF ASP-1705 AND PHE-1748</scope>
    <scope>COFACTOR</scope>
    <scope>ACTIVE SITE</scope>
    <scope>SUBUNIT</scope>
</reference>
<reference key="7">
    <citation type="journal article" date="2007" name="Protein Sci.">
        <title>Solution structure and proposed domain domain recognition interface of an acyl carrier protein domain from a modular polyketide synthase.</title>
        <authorList>
            <person name="Alekseyev V.Y."/>
            <person name="Liu C.W."/>
            <person name="Cane D.E."/>
            <person name="Puglisi J.D."/>
            <person name="Khosla C."/>
        </authorList>
    </citation>
    <scope>STRUCTURE BY NMR OF 3318-3408</scope>
</reference>
<protein>
    <recommendedName>
        <fullName evidence="10">Erythronolide synthase EryA1</fullName>
        <ecNumber evidence="8">2.3.1.94</ecNumber>
    </recommendedName>
    <alternativeName>
        <fullName evidence="9">6-deoxyerythronolide B synthase I</fullName>
    </alternativeName>
    <alternativeName>
        <fullName evidence="10">6-deoxyerythronolide-B synthase EryA1, modules 1 and 2</fullName>
        <shortName evidence="9">DEBS 1</shortName>
    </alternativeName>
    <alternativeName>
        <fullName evidence="10">ORF C</fullName>
    </alternativeName>
</protein>
<accession>Q03131</accession>
<evidence type="ECO:0000250" key="1">
    <source>
        <dbReference type="UniProtKB" id="Q03132"/>
    </source>
</evidence>
<evidence type="ECO:0000250" key="2">
    <source>
        <dbReference type="UniProtKB" id="Q03133"/>
    </source>
</evidence>
<evidence type="ECO:0000255" key="3">
    <source>
        <dbReference type="PROSITE-ProRule" id="PRU00258"/>
    </source>
</evidence>
<evidence type="ECO:0000255" key="4">
    <source>
        <dbReference type="PROSITE-ProRule" id="PRU01348"/>
    </source>
</evidence>
<evidence type="ECO:0000255" key="5">
    <source>
        <dbReference type="PROSITE-ProRule" id="PRU10022"/>
    </source>
</evidence>
<evidence type="ECO:0000256" key="6">
    <source>
        <dbReference type="SAM" id="MobiDB-lite"/>
    </source>
</evidence>
<evidence type="ECO:0000269" key="7">
    <source>
    </source>
</evidence>
<evidence type="ECO:0000269" key="8">
    <source>
    </source>
</evidence>
<evidence type="ECO:0000303" key="9">
    <source>
    </source>
</evidence>
<evidence type="ECO:0000305" key="10"/>
<evidence type="ECO:0000305" key="11">
    <source>
    </source>
</evidence>
<evidence type="ECO:0000305" key="12">
    <source>
    </source>
</evidence>
<evidence type="ECO:0000305" key="13">
    <source>
    </source>
</evidence>
<evidence type="ECO:0000305" key="14">
    <source>
    </source>
</evidence>
<evidence type="ECO:0007829" key="15">
    <source>
        <dbReference type="PDB" id="2FR0"/>
    </source>
</evidence>
<evidence type="ECO:0007829" key="16">
    <source>
        <dbReference type="PDB" id="2FR1"/>
    </source>
</evidence>
<evidence type="ECO:0007829" key="17">
    <source>
        <dbReference type="PDB" id="2JU1"/>
    </source>
</evidence>
<evidence type="ECO:0007829" key="18">
    <source>
        <dbReference type="PDB" id="7M7F"/>
    </source>
</evidence>
<evidence type="ECO:0007829" key="19">
    <source>
        <dbReference type="PDB" id="7M7I"/>
    </source>
</evidence>
<evidence type="ECO:0007829" key="20">
    <source>
        <dbReference type="PDB" id="8EE0"/>
    </source>
</evidence>
<evidence type="ECO:0007829" key="21">
    <source>
        <dbReference type="PDB" id="8EE1"/>
    </source>
</evidence>
<keyword id="KW-0002">3D-structure</keyword>
<keyword id="KW-0012">Acyltransferase</keyword>
<keyword id="KW-0045">Antibiotic biosynthesis</keyword>
<keyword id="KW-0511">Multifunctional enzyme</keyword>
<keyword id="KW-0521">NADP</keyword>
<keyword id="KW-0596">Phosphopantetheine</keyword>
<keyword id="KW-0597">Phosphoprotein</keyword>
<keyword id="KW-0677">Repeat</keyword>
<keyword id="KW-0808">Transferase</keyword>
<feature type="chain" id="PRO_0000180293" description="Erythronolide synthase EryA1">
    <location>
        <begin position="1"/>
        <end position="3491"/>
    </location>
</feature>
<feature type="domain" description="Carrier 1" evidence="3">
    <location>
        <begin position="412"/>
        <end position="487"/>
    </location>
</feature>
<feature type="domain" description="Ketosynthase family 3 (KS3) 1" evidence="4">
    <location>
        <begin position="504"/>
        <end position="928"/>
    </location>
</feature>
<feature type="domain" description="Carrier 2" evidence="3">
    <location>
        <begin position="1886"/>
        <end position="1961"/>
    </location>
</feature>
<feature type="domain" description="Ketosynthase family 3 (KS3) 2" evidence="4">
    <location>
        <begin position="1979"/>
        <end position="2402"/>
    </location>
</feature>
<feature type="domain" description="Carrier 3" evidence="3">
    <location>
        <begin position="3329"/>
        <end position="3407"/>
    </location>
</feature>
<feature type="region of interest" description="Loading domain" evidence="10">
    <location>
        <begin position="1"/>
        <end position="484"/>
    </location>
</feature>
<feature type="region of interest" description="Acyltransferase 1" evidence="10">
    <location>
        <begin position="57"/>
        <end position="372"/>
    </location>
</feature>
<feature type="region of interest" description="Disordered" evidence="6">
    <location>
        <begin position="386"/>
        <end position="410"/>
    </location>
</feature>
<feature type="region of interest" description="Module 1" evidence="10">
    <location>
        <begin position="507"/>
        <end position="1958"/>
    </location>
</feature>
<feature type="region of interest" description="Acyltransferase 2" evidence="10">
    <location>
        <begin position="1031"/>
        <end position="1352"/>
    </location>
</feature>
<feature type="region of interest" description="Beta-ketoacyl reductase 1" evidence="10">
    <location>
        <begin position="1613"/>
        <end position="1790"/>
    </location>
</feature>
<feature type="region of interest" description="Module 2" evidence="10">
    <location>
        <begin position="1982"/>
        <end position="3404"/>
    </location>
</feature>
<feature type="region of interest" description="Acyltransferase 3" evidence="10">
    <location>
        <begin position="2508"/>
        <end position="2827"/>
    </location>
</feature>
<feature type="region of interest" description="Beta-ketoacyl reductase 2" evidence="10">
    <location>
        <begin position="3057"/>
        <end position="3233"/>
    </location>
</feature>
<feature type="region of interest" description="Disordered" evidence="6">
    <location>
        <begin position="3456"/>
        <end position="3491"/>
    </location>
</feature>
<feature type="compositionally biased region" description="Basic residues" evidence="6">
    <location>
        <begin position="391"/>
        <end position="400"/>
    </location>
</feature>
<feature type="compositionally biased region" description="Acidic residues" evidence="6">
    <location>
        <begin position="3471"/>
        <end position="3481"/>
    </location>
</feature>
<feature type="active site" description="Acyl-ester intermediate; for acyltransferase 1 activity" evidence="10">
    <location>
        <position position="145"/>
    </location>
</feature>
<feature type="active site" description="Acyl-thioester intermediate; for beta-ketoacyl synthase 1 activity" evidence="4">
    <location>
        <position position="677"/>
    </location>
</feature>
<feature type="active site" description="For beta-ketoacyl synthase 1 activity" evidence="4">
    <location>
        <position position="812"/>
    </location>
</feature>
<feature type="active site" description="For beta-ketoacyl synthase 1 activity" evidence="4">
    <location>
        <position position="850"/>
    </location>
</feature>
<feature type="active site" description="Acyl-ester intermediate; for acyltransferase 2 activity" evidence="2 5">
    <location>
        <position position="1128"/>
    </location>
</feature>
<feature type="active site" description="For beta-ketoacyl reductase 1 activity" evidence="1 11">
    <location>
        <position position="1760"/>
    </location>
</feature>
<feature type="active site" description="Acyl-thioester intermediate; for beta-ketoacyl synthase 2 activity" evidence="4">
    <location>
        <position position="2148"/>
    </location>
</feature>
<feature type="active site" description="For beta-ketoacyl synthase 2 activity" evidence="4">
    <location>
        <position position="2283"/>
    </location>
</feature>
<feature type="active site" description="For beta-ketoacyl synthase 2 activity" evidence="4">
    <location>
        <position position="2323"/>
    </location>
</feature>
<feature type="active site" description="Acyl-ester intermediate; for acyltransferase 3 activity" evidence="2 5">
    <location>
        <position position="2598"/>
    </location>
</feature>
<feature type="active site" description="For beta-ketoacyl reductase 2 activity" evidence="10">
    <location>
        <position position="3203"/>
    </location>
</feature>
<feature type="binding site" evidence="7">
    <location>
        <begin position="1621"/>
        <end position="1624"/>
    </location>
    <ligand>
        <name>NADP(+)</name>
        <dbReference type="ChEBI" id="CHEBI:58349"/>
        <label>1</label>
    </ligand>
</feature>
<feature type="binding site" evidence="7">
    <location>
        <begin position="1644"/>
        <end position="1647"/>
    </location>
    <ligand>
        <name>NADP(+)</name>
        <dbReference type="ChEBI" id="CHEBI:58349"/>
        <label>1</label>
    </ligand>
</feature>
<feature type="binding site" evidence="7">
    <location>
        <begin position="1673"/>
        <end position="1674"/>
    </location>
    <ligand>
        <name>NADP(+)</name>
        <dbReference type="ChEBI" id="CHEBI:58349"/>
        <label>1</label>
    </ligand>
</feature>
<feature type="binding site" evidence="7">
    <location>
        <position position="1723"/>
    </location>
    <ligand>
        <name>NADP(+)</name>
        <dbReference type="ChEBI" id="CHEBI:58349"/>
        <label>1</label>
    </ligand>
</feature>
<feature type="binding site" evidence="7">
    <location>
        <begin position="1745"/>
        <end position="1746"/>
    </location>
    <ligand>
        <name>NADP(+)</name>
        <dbReference type="ChEBI" id="CHEBI:58349"/>
        <label>1</label>
    </ligand>
</feature>
<feature type="binding site" evidence="10">
    <location>
        <begin position="3065"/>
        <end position="3068"/>
    </location>
    <ligand>
        <name>NADP(+)</name>
        <dbReference type="ChEBI" id="CHEBI:58349"/>
        <label>2</label>
    </ligand>
</feature>
<feature type="binding site" evidence="10">
    <location>
        <begin position="3088"/>
        <end position="3091"/>
    </location>
    <ligand>
        <name>NADP(+)</name>
        <dbReference type="ChEBI" id="CHEBI:58349"/>
        <label>2</label>
    </ligand>
</feature>
<feature type="binding site" evidence="10">
    <location>
        <begin position="3117"/>
        <end position="3118"/>
    </location>
    <ligand>
        <name>NADP(+)</name>
        <dbReference type="ChEBI" id="CHEBI:58349"/>
        <label>2</label>
    </ligand>
</feature>
<feature type="binding site" evidence="10">
    <location>
        <position position="3168"/>
    </location>
    <ligand>
        <name>NADP(+)</name>
        <dbReference type="ChEBI" id="CHEBI:58349"/>
        <label>2</label>
    </ligand>
</feature>
<feature type="binding site" evidence="10">
    <location>
        <begin position="3188"/>
        <end position="3189"/>
    </location>
    <ligand>
        <name>NADP(+)</name>
        <dbReference type="ChEBI" id="CHEBI:58349"/>
        <label>2</label>
    </ligand>
</feature>
<feature type="site" description="Could be the principal determinant of stereospecificity" evidence="11">
    <location>
        <position position="1748"/>
    </location>
</feature>
<feature type="modified residue" description="O-(pantetheine 4'-phosphoryl)serine" evidence="3">
    <location>
        <position position="447"/>
    </location>
</feature>
<feature type="modified residue" description="O-(pantetheine 4'-phosphoryl)serine" evidence="3">
    <location>
        <position position="1921"/>
    </location>
</feature>
<feature type="modified residue" description="O-(pantetheine 4'-phosphoryl)serine" evidence="3">
    <location>
        <position position="3367"/>
    </location>
</feature>
<feature type="mutagenesis site" description="Still able to produce the triketide lactone (TKL), albeit at reduced titer (40%) compared to the wild-type. Still able to produce the triketide lactone (TKL), albeit at reduced titer (10%) compared to the wild-type; when associated with G-1748." evidence="7">
    <original>D</original>
    <variation>A</variation>
    <location>
        <position position="1705"/>
    </location>
</feature>
<feature type="mutagenesis site" description="Still able to produce the triketide lactone (TKL), albeit at reduced titer (10%) compared to the wild-type; when associated with A-1705." evidence="7">
    <original>F</original>
    <variation>G</variation>
    <location>
        <position position="1748"/>
    </location>
</feature>
<feature type="strand" evidence="18">
    <location>
        <begin position="507"/>
        <end position="515"/>
    </location>
</feature>
<feature type="strand" evidence="19">
    <location>
        <begin position="517"/>
        <end position="519"/>
    </location>
</feature>
<feature type="helix" evidence="18">
    <location>
        <begin position="523"/>
        <end position="530"/>
    </location>
</feature>
<feature type="turn" evidence="18">
    <location>
        <begin position="531"/>
        <end position="533"/>
    </location>
</feature>
<feature type="strand" evidence="18">
    <location>
        <begin position="571"/>
        <end position="576"/>
    </location>
</feature>
<feature type="turn" evidence="18">
    <location>
        <begin position="578"/>
        <end position="582"/>
    </location>
</feature>
<feature type="helix" evidence="18">
    <location>
        <begin position="585"/>
        <end position="590"/>
    </location>
</feature>
<feature type="helix" evidence="18">
    <location>
        <begin position="593"/>
        <end position="607"/>
    </location>
</feature>
<feature type="turn" evidence="18">
    <location>
        <begin position="608"/>
        <end position="610"/>
    </location>
</feature>
<feature type="turn" evidence="18">
    <location>
        <begin position="613"/>
        <end position="615"/>
    </location>
</feature>
<feature type="strand" evidence="19">
    <location>
        <begin position="617"/>
        <end position="619"/>
    </location>
</feature>
<feature type="strand" evidence="18">
    <location>
        <begin position="621"/>
        <end position="626"/>
    </location>
</feature>
<feature type="helix" evidence="18">
    <location>
        <begin position="636"/>
        <end position="638"/>
    </location>
</feature>
<feature type="strand" evidence="18">
    <location>
        <begin position="644"/>
        <end position="646"/>
    </location>
</feature>
<feature type="helix" evidence="18">
    <location>
        <begin position="647"/>
        <end position="650"/>
    </location>
</feature>
<feature type="helix" evidence="18">
    <location>
        <begin position="655"/>
        <end position="663"/>
    </location>
</feature>
<feature type="strand" evidence="18">
    <location>
        <begin position="670"/>
        <end position="674"/>
    </location>
</feature>
<feature type="helix" evidence="18">
    <location>
        <begin position="676"/>
        <end position="678"/>
    </location>
</feature>
<feature type="helix" evidence="18">
    <location>
        <begin position="679"/>
        <end position="692"/>
    </location>
</feature>
<feature type="strand" evidence="18">
    <location>
        <begin position="697"/>
        <end position="705"/>
    </location>
</feature>
<feature type="strand" evidence="19">
    <location>
        <begin position="708"/>
        <end position="710"/>
    </location>
</feature>
<feature type="helix" evidence="18">
    <location>
        <begin position="711"/>
        <end position="715"/>
    </location>
</feature>
<feature type="turn" evidence="18">
    <location>
        <begin position="716"/>
        <end position="720"/>
    </location>
</feature>
<feature type="strand" evidence="18">
    <location>
        <begin position="743"/>
        <end position="751"/>
    </location>
</feature>
<feature type="helix" evidence="18">
    <location>
        <begin position="752"/>
        <end position="757"/>
    </location>
</feature>
<feature type="strand" evidence="18">
    <location>
        <begin position="764"/>
        <end position="773"/>
    </location>
</feature>
<feature type="strand" evidence="18">
    <location>
        <begin position="778"/>
        <end position="782"/>
    </location>
</feature>
<feature type="helix" evidence="18">
    <location>
        <begin position="785"/>
        <end position="799"/>
    </location>
</feature>
<feature type="helix" evidence="18">
    <location>
        <begin position="803"/>
        <end position="805"/>
    </location>
</feature>
<feature type="strand" evidence="18">
    <location>
        <begin position="807"/>
        <end position="810"/>
    </location>
</feature>
<feature type="helix" evidence="18">
    <location>
        <begin position="819"/>
        <end position="830"/>
    </location>
</feature>
<feature type="helix" evidence="18">
    <location>
        <begin position="832"/>
        <end position="834"/>
    </location>
</feature>
<feature type="strand" evidence="18">
    <location>
        <begin position="839"/>
        <end position="842"/>
    </location>
</feature>
<feature type="helix" evidence="18">
    <location>
        <begin position="844"/>
        <end position="848"/>
    </location>
</feature>
<feature type="helix" evidence="18">
    <location>
        <begin position="852"/>
        <end position="854"/>
    </location>
</feature>
<feature type="helix" evidence="18">
    <location>
        <begin position="857"/>
        <end position="869"/>
    </location>
</feature>
<feature type="strand" evidence="18">
    <location>
        <begin position="879"/>
        <end position="881"/>
    </location>
</feature>
<feature type="strand" evidence="18">
    <location>
        <begin position="891"/>
        <end position="894"/>
    </location>
</feature>
<feature type="strand" evidence="18">
    <location>
        <begin position="909"/>
        <end position="915"/>
    </location>
</feature>
<feature type="strand" evidence="18">
    <location>
        <begin position="919"/>
        <end position="928"/>
    </location>
</feature>
<feature type="strand" evidence="18">
    <location>
        <begin position="947"/>
        <end position="950"/>
    </location>
</feature>
<feature type="helix" evidence="18">
    <location>
        <begin position="954"/>
        <end position="957"/>
    </location>
</feature>
<feature type="turn" evidence="18">
    <location>
        <begin position="958"/>
        <end position="961"/>
    </location>
</feature>
<feature type="helix" evidence="18">
    <location>
        <begin position="962"/>
        <end position="970"/>
    </location>
</feature>
<feature type="helix" evidence="18">
    <location>
        <begin position="976"/>
        <end position="984"/>
    </location>
</feature>
<feature type="strand" evidence="18">
    <location>
        <begin position="985"/>
        <end position="987"/>
    </location>
</feature>
<feature type="strand" evidence="18">
    <location>
        <begin position="991"/>
        <end position="996"/>
    </location>
</feature>
<feature type="strand" evidence="18">
    <location>
        <begin position="999"/>
        <end position="1004"/>
    </location>
</feature>
<feature type="turn" evidence="18">
    <location>
        <begin position="1005"/>
        <end position="1014"/>
    </location>
</feature>
<feature type="strand" evidence="18">
    <location>
        <begin position="1018"/>
        <end position="1022"/>
    </location>
</feature>
<feature type="strand" evidence="18">
    <location>
        <begin position="1030"/>
        <end position="1034"/>
    </location>
</feature>
<feature type="helix" evidence="18">
    <location>
        <begin position="1045"/>
        <end position="1051"/>
    </location>
</feature>
<feature type="helix" evidence="18">
    <location>
        <begin position="1055"/>
        <end position="1066"/>
    </location>
</feature>
<feature type="turn" evidence="18">
    <location>
        <begin position="1067"/>
        <end position="1069"/>
    </location>
</feature>
<feature type="helix" evidence="18">
    <location>
        <begin position="1074"/>
        <end position="1079"/>
    </location>
</feature>
<feature type="strand" evidence="18">
    <location>
        <begin position="1085"/>
        <end position="1089"/>
    </location>
</feature>
<feature type="helix" evidence="18">
    <location>
        <begin position="1096"/>
        <end position="1116"/>
    </location>
</feature>
<feature type="strand" evidence="18">
    <location>
        <begin position="1122"/>
        <end position="1129"/>
    </location>
</feature>
<feature type="helix" evidence="18">
    <location>
        <begin position="1130"/>
        <end position="1137"/>
    </location>
</feature>
<feature type="strand" evidence="18">
    <location>
        <begin position="1139"/>
        <end position="1141"/>
    </location>
</feature>
<feature type="helix" evidence="18">
    <location>
        <begin position="1143"/>
        <end position="1157"/>
    </location>
</feature>
<feature type="strand" evidence="18">
    <location>
        <begin position="1162"/>
        <end position="1169"/>
    </location>
</feature>
<feature type="helix" evidence="18">
    <location>
        <begin position="1173"/>
        <end position="1179"/>
    </location>
</feature>
<feature type="strand" evidence="18">
    <location>
        <begin position="1184"/>
        <end position="1189"/>
    </location>
</feature>
<feature type="strand" evidence="18">
    <location>
        <begin position="1195"/>
        <end position="1200"/>
    </location>
</feature>
<feature type="turn" evidence="18">
    <location>
        <begin position="1201"/>
        <end position="1203"/>
    </location>
</feature>
<feature type="helix" evidence="18">
    <location>
        <begin position="1204"/>
        <end position="1211"/>
    </location>
</feature>
<feature type="helix" evidence="18">
    <location>
        <begin position="1212"/>
        <end position="1214"/>
    </location>
</feature>
<feature type="strand" evidence="18">
    <location>
        <begin position="1218"/>
        <end position="1220"/>
    </location>
</feature>
<feature type="strand" evidence="18">
    <location>
        <begin position="1228"/>
        <end position="1231"/>
    </location>
</feature>
<feature type="helix" evidence="18">
    <location>
        <begin position="1232"/>
        <end position="1235"/>
    </location>
</feature>
<feature type="helix" evidence="18">
    <location>
        <begin position="1236"/>
        <end position="1241"/>
    </location>
</feature>
<feature type="strand" evidence="19">
    <location>
        <begin position="1256"/>
        <end position="1258"/>
    </location>
</feature>
<feature type="strand" evidence="18">
    <location>
        <begin position="1259"/>
        <end position="1261"/>
    </location>
</feature>
<feature type="strand" evidence="19">
    <location>
        <begin position="1263"/>
        <end position="1265"/>
    </location>
</feature>
<feature type="helix" evidence="18">
    <location>
        <begin position="1272"/>
        <end position="1278"/>
    </location>
</feature>
<feature type="helix" evidence="18">
    <location>
        <begin position="1285"/>
        <end position="1295"/>
    </location>
</feature>
<feature type="strand" evidence="18">
    <location>
        <begin position="1299"/>
        <end position="1302"/>
    </location>
</feature>
<feature type="strand" evidence="18">
    <location>
        <begin position="1304"/>
        <end position="1306"/>
    </location>
</feature>
<feature type="helix" evidence="18">
    <location>
        <begin position="1310"/>
        <end position="1318"/>
    </location>
</feature>
<feature type="strand" evidence="18">
    <location>
        <begin position="1320"/>
        <end position="1322"/>
    </location>
</feature>
<feature type="strand" evidence="18">
    <location>
        <begin position="1325"/>
        <end position="1329"/>
    </location>
</feature>
<feature type="helix" evidence="18">
    <location>
        <begin position="1337"/>
        <end position="1349"/>
    </location>
</feature>
<feature type="helix" evidence="18">
    <location>
        <begin position="1356"/>
        <end position="1359"/>
    </location>
</feature>
<feature type="strand" evidence="18">
    <location>
        <begin position="1361"/>
        <end position="1364"/>
    </location>
</feature>
<feature type="helix" evidence="16">
    <location>
        <begin position="1397"/>
        <end position="1399"/>
    </location>
</feature>
<feature type="strand" evidence="16">
    <location>
        <begin position="1400"/>
        <end position="1408"/>
    </location>
</feature>
<feature type="strand" evidence="16">
    <location>
        <begin position="1419"/>
        <end position="1425"/>
    </location>
</feature>
<feature type="strand" evidence="19">
    <location>
        <begin position="1427"/>
        <end position="1429"/>
    </location>
</feature>
<feature type="helix" evidence="16">
    <location>
        <begin position="1431"/>
        <end position="1442"/>
    </location>
</feature>
<feature type="turn" evidence="15">
    <location>
        <begin position="1443"/>
        <end position="1445"/>
    </location>
</feature>
<feature type="strand" evidence="16">
    <location>
        <begin position="1447"/>
        <end position="1452"/>
    </location>
</feature>
<feature type="helix" evidence="16">
    <location>
        <begin position="1459"/>
        <end position="1466"/>
    </location>
</feature>
<feature type="strand" evidence="16">
    <location>
        <begin position="1473"/>
        <end position="1477"/>
    </location>
</feature>
<feature type="turn" evidence="16">
    <location>
        <begin position="1479"/>
        <end position="1482"/>
    </location>
</feature>
<feature type="helix" evidence="16">
    <location>
        <begin position="1490"/>
        <end position="1492"/>
    </location>
</feature>
<feature type="helix" evidence="16">
    <location>
        <begin position="1494"/>
        <end position="1508"/>
    </location>
</feature>
<feature type="strand" evidence="16">
    <location>
        <begin position="1515"/>
        <end position="1521"/>
    </location>
</feature>
<feature type="helix" evidence="16">
    <location>
        <begin position="1534"/>
        <end position="1536"/>
    </location>
</feature>
<feature type="helix" evidence="16">
    <location>
        <begin position="1537"/>
        <end position="1549"/>
    </location>
</feature>
<feature type="helix" evidence="16">
    <location>
        <begin position="1551"/>
        <end position="1553"/>
    </location>
</feature>
<feature type="strand" evidence="16">
    <location>
        <begin position="1554"/>
        <end position="1560"/>
    </location>
</feature>
<feature type="helix" evidence="16">
    <location>
        <begin position="1568"/>
        <end position="1576"/>
    </location>
</feature>
<feature type="strand" evidence="16">
    <location>
        <begin position="1584"/>
        <end position="1588"/>
    </location>
</feature>
<feature type="strand" evidence="16">
    <location>
        <begin position="1591"/>
        <end position="1599"/>
    </location>
</feature>
<feature type="strand" evidence="16">
    <location>
        <begin position="1613"/>
        <end position="1618"/>
    </location>
</feature>
<feature type="turn" evidence="16">
    <location>
        <begin position="1619"/>
        <end position="1621"/>
    </location>
</feature>
<feature type="helix" evidence="16">
    <location>
        <begin position="1623"/>
        <end position="1635"/>
    </location>
</feature>
<feature type="strand" evidence="16">
    <location>
        <begin position="1638"/>
        <end position="1646"/>
    </location>
</feature>
<feature type="helix" evidence="16">
    <location>
        <begin position="1647"/>
        <end position="1649"/>
    </location>
</feature>
<feature type="helix" evidence="16">
    <location>
        <begin position="1653"/>
        <end position="1662"/>
    </location>
</feature>
<feature type="strand" evidence="16">
    <location>
        <begin position="1666"/>
        <end position="1671"/>
    </location>
</feature>
<feature type="strand" evidence="18">
    <location>
        <begin position="1674"/>
        <end position="1676"/>
    </location>
</feature>
<feature type="helix" evidence="16">
    <location>
        <begin position="1677"/>
        <end position="1685"/>
    </location>
</feature>
<feature type="strand" evidence="15">
    <location>
        <begin position="1689"/>
        <end position="1691"/>
    </location>
</feature>
<feature type="strand" evidence="16">
    <location>
        <begin position="1693"/>
        <end position="1698"/>
    </location>
</feature>
<feature type="helix" evidence="16">
    <location>
        <begin position="1708"/>
        <end position="1710"/>
    </location>
</feature>
<feature type="helix" evidence="16">
    <location>
        <begin position="1713"/>
        <end position="1719"/>
    </location>
</feature>
<feature type="helix" evidence="16">
    <location>
        <begin position="1721"/>
        <end position="1734"/>
    </location>
</feature>
<feature type="strand" evidence="16">
    <location>
        <begin position="1740"/>
        <end position="1747"/>
    </location>
</feature>
<feature type="helix" evidence="16">
    <location>
        <begin position="1748"/>
        <end position="1751"/>
    </location>
</feature>
<feature type="turn" evidence="16">
    <location>
        <begin position="1758"/>
        <end position="1760"/>
    </location>
</feature>
<feature type="helix" evidence="16">
    <location>
        <begin position="1761"/>
        <end position="1776"/>
    </location>
</feature>
<feature type="strand" evidence="16">
    <location>
        <begin position="1782"/>
        <end position="1786"/>
    </location>
</feature>
<feature type="strand" evidence="15">
    <location>
        <begin position="1789"/>
        <end position="1793"/>
    </location>
</feature>
<feature type="turn" evidence="16">
    <location>
        <begin position="1804"/>
        <end position="1807"/>
    </location>
</feature>
<feature type="helix" evidence="16">
    <location>
        <begin position="1813"/>
        <end position="1825"/>
    </location>
</feature>
<feature type="strand" evidence="18">
    <location>
        <begin position="1829"/>
        <end position="1833"/>
    </location>
</feature>
<feature type="helix" evidence="16">
    <location>
        <begin position="1838"/>
        <end position="1845"/>
    </location>
</feature>
<feature type="strand" evidence="16">
    <location>
        <begin position="1847"/>
        <end position="1849"/>
    </location>
</feature>
<feature type="turn" evidence="16">
    <location>
        <begin position="1853"/>
        <end position="1856"/>
    </location>
</feature>
<feature type="helix" evidence="16">
    <location>
        <begin position="1858"/>
        <end position="1861"/>
    </location>
</feature>
<feature type="helix" evidence="18">
    <location>
        <begin position="1882"/>
        <end position="1899"/>
    </location>
</feature>
<feature type="turn" evidence="18">
    <location>
        <begin position="1914"/>
        <end position="1916"/>
    </location>
</feature>
<feature type="helix" evidence="18">
    <location>
        <begin position="1921"/>
        <end position="1934"/>
    </location>
</feature>
<feature type="helix" evidence="18">
    <location>
        <begin position="1943"/>
        <end position="1946"/>
    </location>
</feature>
<feature type="helix" evidence="18">
    <location>
        <begin position="1950"/>
        <end position="1957"/>
    </location>
</feature>
<feature type="strand" evidence="20">
    <location>
        <begin position="1982"/>
        <end position="1991"/>
    </location>
</feature>
<feature type="turn" evidence="20">
    <location>
        <begin position="1992"/>
        <end position="1994"/>
    </location>
</feature>
<feature type="helix" evidence="20">
    <location>
        <begin position="1998"/>
        <end position="2006"/>
    </location>
</feature>
<feature type="strand" evidence="20">
    <location>
        <begin position="2017"/>
        <end position="2019"/>
    </location>
</feature>
<feature type="turn" evidence="20">
    <location>
        <begin position="2042"/>
        <end position="2045"/>
    </location>
</feature>
<feature type="helix" evidence="20">
    <location>
        <begin position="2050"/>
        <end position="2052"/>
    </location>
</feature>
<feature type="helix" evidence="20">
    <location>
        <begin position="2056"/>
        <end position="2060"/>
    </location>
</feature>
<feature type="helix" evidence="20">
    <location>
        <begin position="2064"/>
        <end position="2079"/>
    </location>
</feature>
<feature type="helix" evidence="20">
    <location>
        <begin position="2084"/>
        <end position="2087"/>
    </location>
</feature>
<feature type="strand" evidence="20">
    <location>
        <begin position="2092"/>
        <end position="2097"/>
    </location>
</feature>
<feature type="helix" evidence="21">
    <location>
        <begin position="2110"/>
        <end position="2112"/>
    </location>
</feature>
<feature type="turn" evidence="20">
    <location>
        <begin position="2118"/>
        <end position="2122"/>
    </location>
</feature>
<feature type="helix" evidence="20">
    <location>
        <begin position="2124"/>
        <end position="2135"/>
    </location>
</feature>
<feature type="strand" evidence="20">
    <location>
        <begin position="2141"/>
        <end position="2144"/>
    </location>
</feature>
<feature type="helix" evidence="20">
    <location>
        <begin position="2147"/>
        <end position="2149"/>
    </location>
</feature>
<feature type="helix" evidence="20">
    <location>
        <begin position="2150"/>
        <end position="2163"/>
    </location>
</feature>
<feature type="strand" evidence="20">
    <location>
        <begin position="2168"/>
        <end position="2176"/>
    </location>
</feature>
<feature type="helix" evidence="20">
    <location>
        <begin position="2182"/>
        <end position="2190"/>
    </location>
</feature>
<feature type="strand" evidence="20">
    <location>
        <begin position="2195"/>
        <end position="2197"/>
    </location>
</feature>
<feature type="strand" evidence="20">
    <location>
        <begin position="2214"/>
        <end position="2222"/>
    </location>
</feature>
<feature type="helix" evidence="20">
    <location>
        <begin position="2223"/>
        <end position="2228"/>
    </location>
</feature>
<feature type="strand" evidence="20">
    <location>
        <begin position="2235"/>
        <end position="2244"/>
    </location>
</feature>
<feature type="helix" evidence="20">
    <location>
        <begin position="2256"/>
        <end position="2270"/>
    </location>
</feature>
<feature type="helix" evidence="20">
    <location>
        <begin position="2274"/>
        <end position="2276"/>
    </location>
</feature>
<feature type="strand" evidence="20">
    <location>
        <begin position="2279"/>
        <end position="2281"/>
    </location>
</feature>
<feature type="helix" evidence="20">
    <location>
        <begin position="2290"/>
        <end position="2301"/>
    </location>
</feature>
<feature type="strand" evidence="20">
    <location>
        <begin position="2312"/>
        <end position="2315"/>
    </location>
</feature>
<feature type="helix" evidence="20">
    <location>
        <begin position="2318"/>
        <end position="2321"/>
    </location>
</feature>
<feature type="helix" evidence="20">
    <location>
        <begin position="2325"/>
        <end position="2327"/>
    </location>
</feature>
<feature type="helix" evidence="20">
    <location>
        <begin position="2328"/>
        <end position="2342"/>
    </location>
</feature>
<feature type="strand" evidence="20">
    <location>
        <begin position="2352"/>
        <end position="2354"/>
    </location>
</feature>
<feature type="strand" evidence="20">
    <location>
        <begin position="2365"/>
        <end position="2367"/>
    </location>
</feature>
<feature type="strand" evidence="20">
    <location>
        <begin position="2383"/>
        <end position="2389"/>
    </location>
</feature>
<feature type="strand" evidence="20">
    <location>
        <begin position="2393"/>
        <end position="2401"/>
    </location>
</feature>
<feature type="strand" evidence="20">
    <location>
        <begin position="2420"/>
        <end position="2430"/>
    </location>
</feature>
<feature type="helix" evidence="20">
    <location>
        <begin position="2431"/>
        <end position="2447"/>
    </location>
</feature>
<feature type="helix" evidence="20">
    <location>
        <begin position="2453"/>
        <end position="2462"/>
    </location>
</feature>
<feature type="strand" evidence="20">
    <location>
        <begin position="2468"/>
        <end position="2477"/>
    </location>
</feature>
<feature type="helix" evidence="20">
    <location>
        <begin position="2478"/>
        <end position="2489"/>
    </location>
</feature>
<feature type="strand" evidence="20">
    <location>
        <begin position="2497"/>
        <end position="2501"/>
    </location>
</feature>
<feature type="strand" evidence="20">
    <location>
        <begin position="2507"/>
        <end position="2511"/>
    </location>
</feature>
<feature type="turn" evidence="20">
    <location>
        <begin position="2519"/>
        <end position="2525"/>
    </location>
</feature>
<feature type="strand" evidence="20">
    <location>
        <begin position="2526"/>
        <end position="2528"/>
    </location>
</feature>
<feature type="helix" evidence="20">
    <location>
        <begin position="2529"/>
        <end position="2545"/>
    </location>
</feature>
<feature type="strand" evidence="20">
    <location>
        <begin position="2546"/>
        <end position="2548"/>
    </location>
</feature>
<feature type="helix" evidence="20">
    <location>
        <begin position="2550"/>
        <end position="2554"/>
    </location>
</feature>
<feature type="helix" evidence="20">
    <location>
        <begin position="2566"/>
        <end position="2586"/>
    </location>
</feature>
<feature type="strand" evidence="20">
    <location>
        <begin position="2591"/>
        <end position="2596"/>
    </location>
</feature>
<feature type="helix" evidence="20">
    <location>
        <begin position="2601"/>
        <end position="2607"/>
    </location>
</feature>
<feature type="helix" evidence="20">
    <location>
        <begin position="2613"/>
        <end position="2629"/>
    </location>
</feature>
<feature type="strand" evidence="20">
    <location>
        <begin position="2636"/>
        <end position="2641"/>
    </location>
</feature>
<feature type="helix" evidence="20">
    <location>
        <begin position="2644"/>
        <end position="2650"/>
    </location>
</feature>
<feature type="strand" evidence="20">
    <location>
        <begin position="2661"/>
        <end position="2664"/>
    </location>
</feature>
<feature type="strand" evidence="20">
    <location>
        <begin position="2670"/>
        <end position="2672"/>
    </location>
</feature>
<feature type="helix" evidence="20">
    <location>
        <begin position="2677"/>
        <end position="2687"/>
    </location>
</feature>
<feature type="turn" evidence="20">
    <location>
        <begin position="2688"/>
        <end position="2690"/>
    </location>
</feature>
<feature type="strand" evidence="20">
    <location>
        <begin position="2692"/>
        <end position="2697"/>
    </location>
</feature>
<feature type="helix" evidence="20">
    <location>
        <begin position="2705"/>
        <end position="2710"/>
    </location>
</feature>
<feature type="helix" evidence="20">
    <location>
        <begin position="2711"/>
        <end position="2717"/>
    </location>
</feature>
<feature type="turn" evidence="20">
    <location>
        <begin position="2718"/>
        <end position="2720"/>
    </location>
</feature>
<feature type="strand" evidence="20">
    <location>
        <begin position="2730"/>
        <end position="2732"/>
    </location>
</feature>
<feature type="turn" evidence="20">
    <location>
        <begin position="2733"/>
        <end position="2736"/>
    </location>
</feature>
<feature type="strand" evidence="20">
    <location>
        <begin position="2737"/>
        <end position="2739"/>
    </location>
</feature>
<feature type="helix" evidence="21">
    <location>
        <begin position="2741"/>
        <end position="2743"/>
    </location>
</feature>
<feature type="helix" evidence="20">
    <location>
        <begin position="2746"/>
        <end position="2754"/>
    </location>
</feature>
<feature type="helix" evidence="20">
    <location>
        <begin position="2759"/>
        <end position="2767"/>
    </location>
</feature>
<feature type="turn" evidence="20">
    <location>
        <begin position="2768"/>
        <end position="2770"/>
    </location>
</feature>
<feature type="strand" evidence="20">
    <location>
        <begin position="2773"/>
        <end position="2776"/>
    </location>
</feature>
<feature type="strand" evidence="20">
    <location>
        <begin position="2778"/>
        <end position="2780"/>
    </location>
</feature>
<feature type="helix" evidence="20">
    <location>
        <begin position="2784"/>
        <end position="2793"/>
    </location>
</feature>
<feature type="strand" evidence="20">
    <location>
        <begin position="2799"/>
        <end position="2801"/>
    </location>
</feature>
<feature type="turn" evidence="21">
    <location>
        <begin position="2806"/>
        <end position="2808"/>
    </location>
</feature>
<feature type="helix" evidence="20">
    <location>
        <begin position="2811"/>
        <end position="2822"/>
    </location>
</feature>
<feature type="turn" evidence="20">
    <location>
        <begin position="2823"/>
        <end position="2825"/>
    </location>
</feature>
<feature type="helix" evidence="20">
    <location>
        <begin position="2830"/>
        <end position="2834"/>
    </location>
</feature>
<feature type="helix" evidence="17">
    <location>
        <begin position="3318"/>
        <end position="3322"/>
    </location>
</feature>
<feature type="helix" evidence="17">
    <location>
        <begin position="3327"/>
        <end position="3345"/>
    </location>
</feature>
<feature type="helix" evidence="17">
    <location>
        <begin position="3351"/>
        <end position="3353"/>
    </location>
</feature>
<feature type="strand" evidence="17">
    <location>
        <begin position="3356"/>
        <end position="3358"/>
    </location>
</feature>
<feature type="helix" evidence="17">
    <location>
        <begin position="3360"/>
        <end position="3363"/>
    </location>
</feature>
<feature type="helix" evidence="17">
    <location>
        <begin position="3368"/>
        <end position="3377"/>
    </location>
</feature>
<feature type="helix" evidence="17">
    <location>
        <begin position="3378"/>
        <end position="3380"/>
    </location>
</feature>
<feature type="helix" evidence="17">
    <location>
        <begin position="3389"/>
        <end position="3392"/>
    </location>
</feature>
<feature type="helix" evidence="17">
    <location>
        <begin position="3396"/>
        <end position="3407"/>
    </location>
</feature>
<dbReference type="EC" id="2.3.1.94" evidence="8"/>
<dbReference type="EMBL" id="M63676">
    <property type="protein sequence ID" value="AAA26493.2"/>
    <property type="molecule type" value="Genomic_DNA"/>
</dbReference>
<dbReference type="EMBL" id="L07626">
    <property type="protein sequence ID" value="AAA26504.1"/>
    <property type="molecule type" value="Genomic_DNA"/>
</dbReference>
<dbReference type="PIR" id="T43231">
    <property type="entry name" value="T43231"/>
</dbReference>
<dbReference type="PDB" id="2FR0">
    <property type="method" value="X-ray"/>
    <property type="resolution" value="1.81 A"/>
    <property type="chains" value="A=1391-1872"/>
</dbReference>
<dbReference type="PDB" id="2FR1">
    <property type="method" value="X-ray"/>
    <property type="resolution" value="1.79 A"/>
    <property type="chains" value="A=1391-1872"/>
</dbReference>
<dbReference type="PDB" id="2JU1">
    <property type="method" value="NMR"/>
    <property type="chains" value="A=3318-3408"/>
</dbReference>
<dbReference type="PDB" id="2JU2">
    <property type="method" value="NMR"/>
    <property type="chains" value="A=3318-3408"/>
</dbReference>
<dbReference type="PDB" id="6W7S">
    <property type="method" value="X-ray"/>
    <property type="resolution" value="2.25 A"/>
    <property type="chains" value="A=1395-1875"/>
</dbReference>
<dbReference type="PDB" id="6WH9">
    <property type="method" value="X-ray"/>
    <property type="resolution" value="2.75 A"/>
    <property type="chains" value="A/D/G=1395-1875"/>
</dbReference>
<dbReference type="PDB" id="7M7F">
    <property type="method" value="EM"/>
    <property type="resolution" value="3.20 A"/>
    <property type="chains" value="A/B=504-1957"/>
</dbReference>
<dbReference type="PDB" id="7M7G">
    <property type="method" value="EM"/>
    <property type="resolution" value="4.10 A"/>
    <property type="chains" value="A/B=504-1957"/>
</dbReference>
<dbReference type="PDB" id="7M7H">
    <property type="method" value="EM"/>
    <property type="resolution" value="4.10 A"/>
    <property type="chains" value="A/B=504-1957"/>
</dbReference>
<dbReference type="PDB" id="7M7I">
    <property type="method" value="EM"/>
    <property type="resolution" value="3.40 A"/>
    <property type="chains" value="A/B=2001-2045"/>
</dbReference>
<dbReference type="PDB" id="7M7J">
    <property type="method" value="EM"/>
    <property type="resolution" value="4.30 A"/>
    <property type="chains" value="A/B=504-1797, A/B=2001-2045"/>
</dbReference>
<dbReference type="PDB" id="8EE0">
    <property type="method" value="X-ray"/>
    <property type="resolution" value="2.65 A"/>
    <property type="chains" value="A=1980-2867"/>
</dbReference>
<dbReference type="PDB" id="8EE1">
    <property type="method" value="X-ray"/>
    <property type="resolution" value="2.70 A"/>
    <property type="chains" value="A/D=1980-2867"/>
</dbReference>
<dbReference type="PDB" id="8TJN">
    <property type="method" value="EM"/>
    <property type="resolution" value="3.73 A"/>
    <property type="chains" value="A/B=504-1962"/>
</dbReference>
<dbReference type="PDB" id="8TJO">
    <property type="method" value="EM"/>
    <property type="resolution" value="3.61 A"/>
    <property type="chains" value="A/B=479-1962, A/B=2240-2248"/>
</dbReference>
<dbReference type="PDBsum" id="2FR0"/>
<dbReference type="PDBsum" id="2FR1"/>
<dbReference type="PDBsum" id="2JU1"/>
<dbReference type="PDBsum" id="2JU2"/>
<dbReference type="PDBsum" id="6W7S"/>
<dbReference type="PDBsum" id="6WH9"/>
<dbReference type="PDBsum" id="7M7F"/>
<dbReference type="PDBsum" id="7M7G"/>
<dbReference type="PDBsum" id="7M7H"/>
<dbReference type="PDBsum" id="7M7I"/>
<dbReference type="PDBsum" id="7M7J"/>
<dbReference type="PDBsum" id="8EE0"/>
<dbReference type="PDBsum" id="8EE1"/>
<dbReference type="PDBsum" id="8TJN"/>
<dbReference type="PDBsum" id="8TJO"/>
<dbReference type="SMR" id="Q03131"/>
<dbReference type="ABCD" id="Q03131">
    <property type="antibodies" value="2 sequenced antibodies"/>
</dbReference>
<dbReference type="BioCyc" id="MetaCyc:MONOMER-17077"/>
<dbReference type="BRENDA" id="2.3.1.94">
    <property type="organism ID" value="5518"/>
</dbReference>
<dbReference type="UniPathway" id="UPA00240"/>
<dbReference type="EvolutionaryTrace" id="Q03131"/>
<dbReference type="GO" id="GO:0004315">
    <property type="term" value="F:3-oxoacyl-[acyl-carrier-protein] synthase activity"/>
    <property type="evidence" value="ECO:0007669"/>
    <property type="project" value="InterPro"/>
</dbReference>
<dbReference type="GO" id="GO:0047879">
    <property type="term" value="F:erythronolide synthase activity"/>
    <property type="evidence" value="ECO:0000314"/>
    <property type="project" value="UniProtKB"/>
</dbReference>
<dbReference type="GO" id="GO:0004312">
    <property type="term" value="F:fatty acid synthase activity"/>
    <property type="evidence" value="ECO:0007669"/>
    <property type="project" value="TreeGrafter"/>
</dbReference>
<dbReference type="GO" id="GO:0031177">
    <property type="term" value="F:phosphopantetheine binding"/>
    <property type="evidence" value="ECO:0000304"/>
    <property type="project" value="UniProtKB"/>
</dbReference>
<dbReference type="GO" id="GO:0006633">
    <property type="term" value="P:fatty acid biosynthetic process"/>
    <property type="evidence" value="ECO:0007669"/>
    <property type="project" value="InterPro"/>
</dbReference>
<dbReference type="GO" id="GO:0033068">
    <property type="term" value="P:macrolide biosynthetic process"/>
    <property type="evidence" value="ECO:0000314"/>
    <property type="project" value="UniProtKB"/>
</dbReference>
<dbReference type="CDD" id="cd08952">
    <property type="entry name" value="KR_1_SDR_x"/>
    <property type="match status" value="2"/>
</dbReference>
<dbReference type="CDD" id="cd00833">
    <property type="entry name" value="PKS"/>
    <property type="match status" value="2"/>
</dbReference>
<dbReference type="FunFam" id="3.40.50.720:FF:000550">
    <property type="entry name" value="AmphB polyketide synthase"/>
    <property type="match status" value="1"/>
</dbReference>
<dbReference type="FunFam" id="3.40.47.10:FF:000019">
    <property type="entry name" value="Polyketide synthase type I"/>
    <property type="match status" value="2"/>
</dbReference>
<dbReference type="FunFam" id="3.40.366.10:FF:000002">
    <property type="entry name" value="Probable polyketide synthase 2"/>
    <property type="match status" value="3"/>
</dbReference>
<dbReference type="FunFam" id="1.10.1200.10:FF:000007">
    <property type="entry name" value="Probable polyketide synthase pks17"/>
    <property type="match status" value="2"/>
</dbReference>
<dbReference type="Gene3D" id="3.30.70.3290">
    <property type="match status" value="3"/>
</dbReference>
<dbReference type="Gene3D" id="3.40.47.10">
    <property type="match status" value="2"/>
</dbReference>
<dbReference type="Gene3D" id="1.10.1200.10">
    <property type="entry name" value="ACP-like"/>
    <property type="match status" value="3"/>
</dbReference>
<dbReference type="Gene3D" id="3.40.366.10">
    <property type="entry name" value="Malonyl-Coenzyme A Acyl Carrier Protein, domain 2"/>
    <property type="match status" value="3"/>
</dbReference>
<dbReference type="Gene3D" id="3.40.50.720">
    <property type="entry name" value="NAD(P)-binding Rossmann-like Domain"/>
    <property type="match status" value="2"/>
</dbReference>
<dbReference type="InterPro" id="IPR001227">
    <property type="entry name" value="Ac_transferase_dom_sf"/>
</dbReference>
<dbReference type="InterPro" id="IPR036736">
    <property type="entry name" value="ACP-like_sf"/>
</dbReference>
<dbReference type="InterPro" id="IPR014043">
    <property type="entry name" value="Acyl_transferase_dom"/>
</dbReference>
<dbReference type="InterPro" id="IPR016035">
    <property type="entry name" value="Acyl_Trfase/lysoPLipase"/>
</dbReference>
<dbReference type="InterPro" id="IPR018201">
    <property type="entry name" value="Ketoacyl_synth_AS"/>
</dbReference>
<dbReference type="InterPro" id="IPR014031">
    <property type="entry name" value="Ketoacyl_synth_C"/>
</dbReference>
<dbReference type="InterPro" id="IPR014030">
    <property type="entry name" value="Ketoacyl_synth_N"/>
</dbReference>
<dbReference type="InterPro" id="IPR016036">
    <property type="entry name" value="Malonyl_transacylase_ACP-bd"/>
</dbReference>
<dbReference type="InterPro" id="IPR036291">
    <property type="entry name" value="NAD(P)-bd_dom_sf"/>
</dbReference>
<dbReference type="InterPro" id="IPR032821">
    <property type="entry name" value="PKS_assoc"/>
</dbReference>
<dbReference type="InterPro" id="IPR020841">
    <property type="entry name" value="PKS_Beta-ketoAc_synthase_dom"/>
</dbReference>
<dbReference type="InterPro" id="IPR013968">
    <property type="entry name" value="PKS_KR"/>
</dbReference>
<dbReference type="InterPro" id="IPR050091">
    <property type="entry name" value="PKS_NRPS_Biosynth_Enz"/>
</dbReference>
<dbReference type="InterPro" id="IPR020806">
    <property type="entry name" value="PKS_PP-bd"/>
</dbReference>
<dbReference type="InterPro" id="IPR009081">
    <property type="entry name" value="PP-bd_ACP"/>
</dbReference>
<dbReference type="InterPro" id="IPR006162">
    <property type="entry name" value="Ppantetheine_attach_site"/>
</dbReference>
<dbReference type="InterPro" id="IPR016039">
    <property type="entry name" value="Thiolase-like"/>
</dbReference>
<dbReference type="PANTHER" id="PTHR43775">
    <property type="entry name" value="FATTY ACID SYNTHASE"/>
    <property type="match status" value="1"/>
</dbReference>
<dbReference type="PANTHER" id="PTHR43775:SF37">
    <property type="entry name" value="SI:DKEY-61P9.11"/>
    <property type="match status" value="1"/>
</dbReference>
<dbReference type="Pfam" id="PF00698">
    <property type="entry name" value="Acyl_transf_1"/>
    <property type="match status" value="3"/>
</dbReference>
<dbReference type="Pfam" id="PF22621">
    <property type="entry name" value="CurL-like_PKS_C"/>
    <property type="match status" value="1"/>
</dbReference>
<dbReference type="Pfam" id="PF16197">
    <property type="entry name" value="KAsynt_C_assoc"/>
    <property type="match status" value="1"/>
</dbReference>
<dbReference type="Pfam" id="PF00109">
    <property type="entry name" value="ketoacyl-synt"/>
    <property type="match status" value="2"/>
</dbReference>
<dbReference type="Pfam" id="PF02801">
    <property type="entry name" value="Ketoacyl-synt_C"/>
    <property type="match status" value="2"/>
</dbReference>
<dbReference type="Pfam" id="PF08659">
    <property type="entry name" value="KR"/>
    <property type="match status" value="2"/>
</dbReference>
<dbReference type="Pfam" id="PF00550">
    <property type="entry name" value="PP-binding"/>
    <property type="match status" value="3"/>
</dbReference>
<dbReference type="SMART" id="SM00827">
    <property type="entry name" value="PKS_AT"/>
    <property type="match status" value="3"/>
</dbReference>
<dbReference type="SMART" id="SM00822">
    <property type="entry name" value="PKS_KR"/>
    <property type="match status" value="2"/>
</dbReference>
<dbReference type="SMART" id="SM00825">
    <property type="entry name" value="PKS_KS"/>
    <property type="match status" value="2"/>
</dbReference>
<dbReference type="SMART" id="SM00823">
    <property type="entry name" value="PKS_PP"/>
    <property type="match status" value="3"/>
</dbReference>
<dbReference type="SMART" id="SM01294">
    <property type="entry name" value="PKS_PP_betabranch"/>
    <property type="match status" value="2"/>
</dbReference>
<dbReference type="SUPFAM" id="SSF47336">
    <property type="entry name" value="ACP-like"/>
    <property type="match status" value="3"/>
</dbReference>
<dbReference type="SUPFAM" id="SSF52151">
    <property type="entry name" value="FabD/lysophospholipase-like"/>
    <property type="match status" value="3"/>
</dbReference>
<dbReference type="SUPFAM" id="SSF51735">
    <property type="entry name" value="NAD(P)-binding Rossmann-fold domains"/>
    <property type="match status" value="4"/>
</dbReference>
<dbReference type="SUPFAM" id="SSF55048">
    <property type="entry name" value="Probable ACP-binding domain of malonyl-CoA ACP transacylase"/>
    <property type="match status" value="3"/>
</dbReference>
<dbReference type="SUPFAM" id="SSF53901">
    <property type="entry name" value="Thiolase-like"/>
    <property type="match status" value="2"/>
</dbReference>
<dbReference type="PROSITE" id="PS50075">
    <property type="entry name" value="CARRIER"/>
    <property type="match status" value="3"/>
</dbReference>
<dbReference type="PROSITE" id="PS00606">
    <property type="entry name" value="KS3_1"/>
    <property type="match status" value="2"/>
</dbReference>
<dbReference type="PROSITE" id="PS52004">
    <property type="entry name" value="KS3_2"/>
    <property type="match status" value="2"/>
</dbReference>
<dbReference type="PROSITE" id="PS00012">
    <property type="entry name" value="PHOSPHOPANTETHEINE"/>
    <property type="match status" value="3"/>
</dbReference>
<gene>
    <name type="primary">eryA</name>
</gene>
<sequence length="3491" mass="365029">MSGPRSRTTSRRTPVRIGAVVVASSTSELLDGLAAVADGRPHASVVRGVARPSAPVVFVFPGQGAQWAGMAGELLGESRVFAAAMDACARAFEPVTDWTLAQVLDSPEQSRRVEVVQPALFAVQTSLAALWRSFGVTPDAVVGHSIGELAAAHVCGAAGAADAARAAALWSREMIPLVGNGDMAAVALSADEIEPRIARWDDDVVLAGVNGPRSVLLTGSPEPVARRVQELSAEGVRAQVINVSMAAHSAQVDDIAEGMRSALAWFAPGGSEVPFYASLTGGAVDTRELVADYWRRSFRLPVRFDEAIRSALEVGPGTFVEASPHPVLAAALQQTLDAEGSSAAVVPTLQRGQGGMRRFLLAAAQAFTGGVAVDWTAAYDDVGPNPALCRSSRRPRRKTSRPSPASTGTRHRTCCERLLAVVNGETAALAGREADAEATFRELGLDSVLAAQLRAKVSAAIGREVNIALLYDHPTPRALAEALAAGTEVAQRETRARTNEAAPGEPVAVVAMACRLPGGVSTPEEFWELLSEGRDAVAGLPTDRGWDLDSLFHPDPTRSGTAHQRGGGFLTEATAFDPAFFGMSPREALAVDPQQRLMLELSWEVLERAGIPPTSLQASPTGVFVGLIPQEYGPRLAEGGEGVEGYLMTGTTTSVASGRIAYTLGLEGPAISVDTACSSSLVAVHLACQSLRRGESSLAMAGGVTVMPTPGMLVDFSRMNSLAPDGRCKAFSAGANGFGMAEGAGMLLLERLSDARRNGHPVLAVLRGTAVNSDGASNGLSAPNGRAQVRVIQQALAESGLGPADIDAVEAHGTGTRLGDPIEARALFEAYGRDREQPLHLGSVKSNLGHTQAAAGVAGVIKMVLAMRAGTLPRTLHASERSKEIDWSSGAISLLDEPEPWPAGARPRRAGVSSFGISGTNAHAIIEEAPQVVEGERVEAGDVVAPWVLSASSAEGLRAQAARLAAHLREHPGQDPRDIAYSLATGRAALPHRAAFAPVDESAALRVLDGLATGNADGAAVGTSRAQQRAVFVFPGQGWQWAGMAVDLLDTSPVFAAALRECADALEPHLDFEVIPFLRAEAARREQDAALSTERVDVVQPVMFAVMVSLASMWRAHGVEPAAVIGHSQGEIAAACVAGALSLDDAARVVALRSRVIATMPGNKGMASIAAPAGEVRARIGDRVEIAAVNGPRSVVVAGDSDELDRLVASCTTECIRAKRLAVDYASHSSHVETIRDALHAELGEDFHPLPGFVPFFSTVTGRWTQPDELDAGYWYRNLRRTVRFADAVRALAEQGYRTFLEVSAHPILTAAIEEIGDGSGADLSAIHSLRRGDGSLADFGEALSRAFAAGVAVDWESVHLGTGARRVPLPTYPFQRERVWLEPKPVARRSTEVDEVSALRYRIEWRPTGAGEPARLDGTWLVAKYAGTADETSTAAREALESAGARVRELVVDARCGRDELAERLRSVGEVAGVLSLLAVDEAEPEEAPLALASLADTLSLVQAMVSAELGCPLWTVTESAVATGPFERVRNAAHGALWGVGRVIALENPAVWGGLVDVPAGSVAELARHLAAVVSGGAGEDQLALRADGVYGRRWVRAAAPATDDEWKPTGTVLVTGGTGGVGGQIARWLARRGAPHLLLVSRSGPDADGAGELVAELEALGARTTVAACDVTDRESVRELLGGIGDDVPLSAVFHAAATLDDGTVDTLTGERIERASRAKVLGARNLHELTRELDLTAFVLFSSFASAFGAPGLGGYAPGNAYLDGLAQQRRSDGLPATAVAWGTWAGSGMAEGAVADRFRRHGVIEMPPETACRALQNALDRAEVCPIVIDVRWDRFLLAYTAQRPTRLFDEIDDARRAAPQAPAEPRVGALASLPAPEREEALFELVRSHAAAVLGHASAERVPADQAFAELGVDSLSALELRNRLGAATGVRLPTTTVFDHPDVRTLAAHLAAELGGATGAEQAAPATTAPVDEPIAIVGMACRLPGEVDSPERLWELITSGRDSAAEVPDDRGWVPDELMASDAAGTRAHGNFMAGAGDFDAAFFGISPREALAMDPQQRQALETTWEALESAGIPPETLRGSDTGVFVGMSHQGYATGRPRPEDGVDGYLLTGNTASVASGRIAYVLGLEGPALTVDTACSSSLVALHTACGSLRDGDCGLAVAGGVSVMAGPEVFTEFSRQGALSPDGRCKPFSDEADGFGLGEGSAFVVLQRLSDARREGRRVLGVVAGSAVNQDGASNGLSAPSGVAQQRVIRRAWARAGITGADVAVVEAHGTGTRLGDPVEASALLATYGKSRGSSGPVLLGSVKSNIGHAQAAAGVAGVIKVLLGLERGVVPPMLCRGERSGLIDWSSGEIELADGVREWSPAADGVRRAGVSAFGVSGTNAHVIIAEPPEPEPVPQPRRMLPATGVVPVVLSARTGAALRAQAGRLADHLAAHPGIAPADVSWTMARARQHFEERAAVLAADTAEAVHRLRAVADGAVVPGVVTGSASDGGSVFVFPGQGAQWEGMARELLPVPVFAESIAECDAVLSEVAGFSVSEVLEPRPDAPSLERVDVVQPVLFAVMVSLARLWRACGAVPSAVIGHSQGEIAAAVVAGALSLEDGMRVVARRSRAVRAVAGRGSMLSVRGGRSDVEKLLADDSWTGRLEVAAVNGPDAVVVAGDAQAAREFLEYCEGVGIRARAIPVDYASHTAHVEPVRDELVQALAGITPRRAEVPFFSTLTGDFLDGTELDAGYWYRNLRHPVEFHSAVQALTDQGYATFIEVSPHPVLASSVQETLDDAESDAAVLGTLERDAGDADRFLTALADAHTRGVAVDWEAVLGRAGLVDLPGYPFQGKRFWLLPDRTTPRDELDGWFYRVDWTEVPRSEPAALRGRWLVVVPEGHEEDGWTVEVRSALAEAGAEPEVTRGVGGLVGDCAGVVSLLALEGDGAVQTLVLVRELDAEGIDAPLWTVTFGAVDAGSPVARPDQAKLWGLGQVASLERGPRWTGLVDLPHMPDPELRGRLTAVLAGSEDQVAVRADAVRARRLSPAHVTATSEYAVPGGTILVTGGTAGLGAEVARWLAGRGAEHLALVSRRGPDTEGVGDLTAELTRLGARVSVHACDVSSREPVRELVHGLIEQGDVVRGVVHAAGLPQQVAINDMDEAAFDEVVAAKAGGAVHLDELCSDAELFLLFSSGAGVWGSARQGAYAAGNAFLDAFARHRRGRGLPATSVAWGLWAAGGMTGDEEAVSFLRERGVRAMPVPRALAALDRVLASGETAVVVTDVDWPAFAESYTAARPRPLLDRIVTTAPSERAGEPETESLRDRLAGLPRAERTAELVRLVRTSTATVLGHDDPKAVRATTPFKELGFDSLAAVRLRNLLNAATGLRLPSTLVFDHPNASAVAGFLDAELGTEVRGEAPSALAGLDALEGALPEVPATEREELVQRLERMLAALRPVAQAADASGTGANPSGDDLGEAGVDELLEALGRELDGD</sequence>
<proteinExistence type="evidence at protein level"/>
<comment type="function">
    <text evidence="7 8 12">Involved in the biosynthesis of antibiotic erythromycin via the biosynthesis of its aglycone precursor, 6-deoxyerythronolide B (6-dEB).</text>
</comment>
<comment type="catalytic activity">
    <reaction evidence="8">
        <text>6 (S)-methylmalonyl-CoA + propanoyl-CoA + 6 NADPH + 12 H(+) = 6-deoxyerythronolide B + 6 CO2 + 6 NADP(+) + 7 CoA + H2O</text>
        <dbReference type="Rhea" id="RHEA:23068"/>
        <dbReference type="ChEBI" id="CHEBI:15377"/>
        <dbReference type="ChEBI" id="CHEBI:15378"/>
        <dbReference type="ChEBI" id="CHEBI:16089"/>
        <dbReference type="ChEBI" id="CHEBI:16526"/>
        <dbReference type="ChEBI" id="CHEBI:57287"/>
        <dbReference type="ChEBI" id="CHEBI:57327"/>
        <dbReference type="ChEBI" id="CHEBI:57392"/>
        <dbReference type="ChEBI" id="CHEBI:57783"/>
        <dbReference type="ChEBI" id="CHEBI:58349"/>
        <dbReference type="EC" id="2.3.1.94"/>
    </reaction>
</comment>
<comment type="cofactor">
    <cofactor evidence="11">
        <name>pantetheine 4'-phosphate</name>
        <dbReference type="ChEBI" id="CHEBI:47942"/>
    </cofactor>
    <text evidence="10">Binds 3 phosphopantetheines covalently.</text>
</comment>
<comment type="pathway">
    <text evidence="12 14">Antibiotic biosynthesis; erythromycin biosynthesis.</text>
</comment>
<comment type="subunit">
    <text evidence="7 12 13">Homodimer (PubMed:16564177). Erythronolide synthase is composed of EryAI, EryAII and EryAIII multimodular (2 modules) polypeptides each coding for a functional synthase subunit which participates in 2 of the six FAS-like elongation steps required for formation of the polyketide. Module 1, 2, 3, 4, 5, and 6 participating in biosynthesis steps 1, 2, 3, 4, 5, and 6, respectively.</text>
</comment>
<comment type="miscellaneous">
    <text evidence="7 12">Type I modular polyketide synthases (PKSs) catalyze the step-wise condensation of simple carboxylic acid derivatives. Organizationally, type I PKSs are arranged into modules, wherein each module is comprised of a set of catalytic activities that is responsible for a single elongation of the polyketide chain and the appropriate reductive processing of the beta-keto functionality. A minimal elongation module contains an acyl transferase (AT) domain, an acyl-carrier protein (ACP) domain, and a ketosynthase (KS) domain. The AT domain is responsible for loading the methylmalonyl-CoA extender unit onto the phosphopantetheinylated ACP domain. Subsequently, the KS domain decarboxylates and then condenses the ACP-bound extender unit with the growing polyketide chain obtained from the preceding module to yield an ACP-bound beta-ketoacyl intermediate. In addition to the three core domains, each elongation module may contain up to three additional domains: a ketoreductase (KR), dehydratase (DH), and an enoyl reductase (ER) that are responsible for the reductive processing of the beta-keto functionality prior to the next extension step. The presence of a KR domain alone gives rise to a beta-hydroxyl functionality, the presence of both a KR and a DH domain generates an alkene, while the combination of KR, DH, and ER results in complete reduction to the alkane. Finally, a thioesterase (TE) domain, typically found at the terminus of the last elongation module, catalyzes the termination of polyketide biosynthesis. The activity of this domain results in cleavage of the acyl chain from the adjacent ACP and formation of the macrocyclic ring. KR controls the stereochemistry of the beta-hydroxyl group of a polyketide (PubMed:16564177).</text>
</comment>
<organism>
    <name type="scientific">Saccharopolyspora erythraea</name>
    <name type="common">Streptomyces erythraeus</name>
    <dbReference type="NCBI Taxonomy" id="1836"/>
    <lineage>
        <taxon>Bacteria</taxon>
        <taxon>Bacillati</taxon>
        <taxon>Actinomycetota</taxon>
        <taxon>Actinomycetes</taxon>
        <taxon>Pseudonocardiales</taxon>
        <taxon>Pseudonocardiaceae</taxon>
        <taxon>Saccharopolyspora</taxon>
    </lineage>
</organism>